<feature type="chain" id="PRO_0000374686" description="Ribosomal protein uS12 methylthiotransferase RimO">
    <location>
        <begin position="1"/>
        <end position="443"/>
    </location>
</feature>
<feature type="domain" description="MTTase N-terminal" evidence="1">
    <location>
        <begin position="5"/>
        <end position="115"/>
    </location>
</feature>
<feature type="domain" description="Radical SAM core" evidence="2">
    <location>
        <begin position="133"/>
        <end position="374"/>
    </location>
</feature>
<feature type="domain" description="TRAM" evidence="1">
    <location>
        <begin position="377"/>
        <end position="443"/>
    </location>
</feature>
<feature type="binding site" evidence="1">
    <location>
        <position position="14"/>
    </location>
    <ligand>
        <name>[4Fe-4S] cluster</name>
        <dbReference type="ChEBI" id="CHEBI:49883"/>
        <label>1</label>
    </ligand>
</feature>
<feature type="binding site" evidence="1">
    <location>
        <position position="50"/>
    </location>
    <ligand>
        <name>[4Fe-4S] cluster</name>
        <dbReference type="ChEBI" id="CHEBI:49883"/>
        <label>1</label>
    </ligand>
</feature>
<feature type="binding site" evidence="1">
    <location>
        <position position="79"/>
    </location>
    <ligand>
        <name>[4Fe-4S] cluster</name>
        <dbReference type="ChEBI" id="CHEBI:49883"/>
        <label>1</label>
    </ligand>
</feature>
<feature type="binding site" evidence="1">
    <location>
        <position position="147"/>
    </location>
    <ligand>
        <name>[4Fe-4S] cluster</name>
        <dbReference type="ChEBI" id="CHEBI:49883"/>
        <label>2</label>
        <note>4Fe-4S-S-AdoMet</note>
    </ligand>
</feature>
<feature type="binding site" evidence="1">
    <location>
        <position position="151"/>
    </location>
    <ligand>
        <name>[4Fe-4S] cluster</name>
        <dbReference type="ChEBI" id="CHEBI:49883"/>
        <label>2</label>
        <note>4Fe-4S-S-AdoMet</note>
    </ligand>
</feature>
<feature type="binding site" evidence="1">
    <location>
        <position position="154"/>
    </location>
    <ligand>
        <name>[4Fe-4S] cluster</name>
        <dbReference type="ChEBI" id="CHEBI:49883"/>
        <label>2</label>
        <note>4Fe-4S-S-AdoMet</note>
    </ligand>
</feature>
<accession>A3N2T4</accession>
<protein>
    <recommendedName>
        <fullName evidence="1">Ribosomal protein uS12 methylthiotransferase RimO</fullName>
        <shortName evidence="1">uS12 MTTase</shortName>
        <shortName evidence="1">uS12 methylthiotransferase</shortName>
        <ecNumber evidence="1">2.8.4.4</ecNumber>
    </recommendedName>
    <alternativeName>
        <fullName evidence="1">Ribosomal protein uS12 (aspartate-C(3))-methylthiotransferase</fullName>
    </alternativeName>
    <alternativeName>
        <fullName evidence="1">Ribosome maturation factor RimO</fullName>
    </alternativeName>
</protein>
<dbReference type="EC" id="2.8.4.4" evidence="1"/>
<dbReference type="EMBL" id="CP000569">
    <property type="protein sequence ID" value="ABN74720.1"/>
    <property type="molecule type" value="Genomic_DNA"/>
</dbReference>
<dbReference type="RefSeq" id="WP_005605629.1">
    <property type="nucleotide sequence ID" value="NC_009053.1"/>
</dbReference>
<dbReference type="SMR" id="A3N2T4"/>
<dbReference type="STRING" id="416269.APL_1636"/>
<dbReference type="EnsemblBacteria" id="ABN74720">
    <property type="protein sequence ID" value="ABN74720"/>
    <property type="gene ID" value="APL_1636"/>
</dbReference>
<dbReference type="KEGG" id="apl:APL_1636"/>
<dbReference type="eggNOG" id="COG0621">
    <property type="taxonomic scope" value="Bacteria"/>
</dbReference>
<dbReference type="HOGENOM" id="CLU_018697_0_0_6"/>
<dbReference type="Proteomes" id="UP000001432">
    <property type="component" value="Chromosome"/>
</dbReference>
<dbReference type="GO" id="GO:0005829">
    <property type="term" value="C:cytosol"/>
    <property type="evidence" value="ECO:0007669"/>
    <property type="project" value="TreeGrafter"/>
</dbReference>
<dbReference type="GO" id="GO:0051539">
    <property type="term" value="F:4 iron, 4 sulfur cluster binding"/>
    <property type="evidence" value="ECO:0007669"/>
    <property type="project" value="UniProtKB-UniRule"/>
</dbReference>
<dbReference type="GO" id="GO:0035599">
    <property type="term" value="F:aspartic acid methylthiotransferase activity"/>
    <property type="evidence" value="ECO:0007669"/>
    <property type="project" value="TreeGrafter"/>
</dbReference>
<dbReference type="GO" id="GO:0046872">
    <property type="term" value="F:metal ion binding"/>
    <property type="evidence" value="ECO:0007669"/>
    <property type="project" value="UniProtKB-KW"/>
</dbReference>
<dbReference type="GO" id="GO:0103039">
    <property type="term" value="F:protein methylthiotransferase activity"/>
    <property type="evidence" value="ECO:0007669"/>
    <property type="project" value="UniProtKB-EC"/>
</dbReference>
<dbReference type="GO" id="GO:0006400">
    <property type="term" value="P:tRNA modification"/>
    <property type="evidence" value="ECO:0007669"/>
    <property type="project" value="InterPro"/>
</dbReference>
<dbReference type="CDD" id="cd01335">
    <property type="entry name" value="Radical_SAM"/>
    <property type="match status" value="1"/>
</dbReference>
<dbReference type="FunFam" id="2.40.50.140:FF:000060">
    <property type="entry name" value="Ribosomal protein S12 methylthiotransferase RimO"/>
    <property type="match status" value="1"/>
</dbReference>
<dbReference type="FunFam" id="3.40.50.12160:FF:000002">
    <property type="entry name" value="Ribosomal protein S12 methylthiotransferase RimO"/>
    <property type="match status" value="1"/>
</dbReference>
<dbReference type="FunFam" id="3.80.30.20:FF:000001">
    <property type="entry name" value="tRNA-2-methylthio-N(6)-dimethylallyladenosine synthase 2"/>
    <property type="match status" value="1"/>
</dbReference>
<dbReference type="Gene3D" id="3.40.50.12160">
    <property type="entry name" value="Methylthiotransferase, N-terminal domain"/>
    <property type="match status" value="1"/>
</dbReference>
<dbReference type="Gene3D" id="2.40.50.140">
    <property type="entry name" value="Nucleic acid-binding proteins"/>
    <property type="match status" value="1"/>
</dbReference>
<dbReference type="Gene3D" id="3.80.30.20">
    <property type="entry name" value="tm_1862 like domain"/>
    <property type="match status" value="1"/>
</dbReference>
<dbReference type="HAMAP" id="MF_01865">
    <property type="entry name" value="MTTase_RimO"/>
    <property type="match status" value="1"/>
</dbReference>
<dbReference type="InterPro" id="IPR006638">
    <property type="entry name" value="Elp3/MiaA/NifB-like_rSAM"/>
</dbReference>
<dbReference type="InterPro" id="IPR005839">
    <property type="entry name" value="Methylthiotransferase"/>
</dbReference>
<dbReference type="InterPro" id="IPR020612">
    <property type="entry name" value="Methylthiotransferase_CS"/>
</dbReference>
<dbReference type="InterPro" id="IPR013848">
    <property type="entry name" value="Methylthiotransferase_N"/>
</dbReference>
<dbReference type="InterPro" id="IPR038135">
    <property type="entry name" value="Methylthiotransferase_N_sf"/>
</dbReference>
<dbReference type="InterPro" id="IPR012340">
    <property type="entry name" value="NA-bd_OB-fold"/>
</dbReference>
<dbReference type="InterPro" id="IPR005840">
    <property type="entry name" value="Ribosomal_uS12_MeSTrfase_RimO"/>
</dbReference>
<dbReference type="InterPro" id="IPR007197">
    <property type="entry name" value="rSAM"/>
</dbReference>
<dbReference type="InterPro" id="IPR023404">
    <property type="entry name" value="rSAM_horseshoe"/>
</dbReference>
<dbReference type="InterPro" id="IPR002792">
    <property type="entry name" value="TRAM_dom"/>
</dbReference>
<dbReference type="NCBIfam" id="TIGR01125">
    <property type="entry name" value="30S ribosomal protein S12 methylthiotransferase RimO"/>
    <property type="match status" value="1"/>
</dbReference>
<dbReference type="NCBIfam" id="TIGR00089">
    <property type="entry name" value="MiaB/RimO family radical SAM methylthiotransferase"/>
    <property type="match status" value="1"/>
</dbReference>
<dbReference type="PANTHER" id="PTHR43837">
    <property type="entry name" value="RIBOSOMAL PROTEIN S12 METHYLTHIOTRANSFERASE RIMO"/>
    <property type="match status" value="1"/>
</dbReference>
<dbReference type="PANTHER" id="PTHR43837:SF1">
    <property type="entry name" value="RIBOSOMAL PROTEIN US12 METHYLTHIOTRANSFERASE RIMO"/>
    <property type="match status" value="1"/>
</dbReference>
<dbReference type="Pfam" id="PF04055">
    <property type="entry name" value="Radical_SAM"/>
    <property type="match status" value="1"/>
</dbReference>
<dbReference type="Pfam" id="PF18693">
    <property type="entry name" value="TRAM_2"/>
    <property type="match status" value="1"/>
</dbReference>
<dbReference type="Pfam" id="PF00919">
    <property type="entry name" value="UPF0004"/>
    <property type="match status" value="1"/>
</dbReference>
<dbReference type="SFLD" id="SFLDG01082">
    <property type="entry name" value="B12-binding_domain_containing"/>
    <property type="match status" value="1"/>
</dbReference>
<dbReference type="SFLD" id="SFLDS00029">
    <property type="entry name" value="Radical_SAM"/>
    <property type="match status" value="1"/>
</dbReference>
<dbReference type="SFLD" id="SFLDF00274">
    <property type="entry name" value="ribosomal_protein_S12_methylth"/>
    <property type="match status" value="1"/>
</dbReference>
<dbReference type="SMART" id="SM00729">
    <property type="entry name" value="Elp3"/>
    <property type="match status" value="1"/>
</dbReference>
<dbReference type="SUPFAM" id="SSF102114">
    <property type="entry name" value="Radical SAM enzymes"/>
    <property type="match status" value="1"/>
</dbReference>
<dbReference type="PROSITE" id="PS51449">
    <property type="entry name" value="MTTASE_N"/>
    <property type="match status" value="1"/>
</dbReference>
<dbReference type="PROSITE" id="PS01278">
    <property type="entry name" value="MTTASE_RADICAL"/>
    <property type="match status" value="1"/>
</dbReference>
<dbReference type="PROSITE" id="PS51918">
    <property type="entry name" value="RADICAL_SAM"/>
    <property type="match status" value="1"/>
</dbReference>
<dbReference type="PROSITE" id="PS50926">
    <property type="entry name" value="TRAM"/>
    <property type="match status" value="1"/>
</dbReference>
<reference key="1">
    <citation type="journal article" date="2008" name="J. Bacteriol.">
        <title>The complete genome sequence of Actinobacillus pleuropneumoniae L20 (serotype 5b).</title>
        <authorList>
            <person name="Foote S.J."/>
            <person name="Bosse J.T."/>
            <person name="Bouevitch A.B."/>
            <person name="Langford P.R."/>
            <person name="Young N.M."/>
            <person name="Nash J.H.E."/>
        </authorList>
    </citation>
    <scope>NUCLEOTIDE SEQUENCE [LARGE SCALE GENOMIC DNA]</scope>
    <source>
        <strain>L20</strain>
    </source>
</reference>
<sequence length="443" mass="49596">MSTTPNIGFISLGCPKNLVDSERILTELRTDGYNIIPSYENADLVIVNTCGFIDSAVQESLEAIGEALEENGKVIVTGCLGAKENQIREVHPKVLEITGPHSYEAVMKHVHKYVPRPERNIYTSLVPAQGVKLTPKHYAYLKISEGCDHRCTFCIIPSMRGDLDSRPIVQVLDEAKRLADSGVKELLIVSQDTSAYALDQSKENQNKTVFWNGAPIKNNLITLCEQLGSLGIWVRLHYVYPYPHVDDLIPLMAQGKILPYLDIPLQHASPKVLKAMKRPGAIDRTLERIKKWREICPKLTLRSTFIVGFPGETEEDFQMLLDFLEEAQLDRVGCFKFSPVEGAVATEMADQVPEDVKEERFHRFMQVQQRISAARLQQKVGKTLAVIIDEIDEEGIIGRSMADAPEIDGVVYVDNLSEQEVKVGQVISVSITNADEYDLWGTC</sequence>
<evidence type="ECO:0000255" key="1">
    <source>
        <dbReference type="HAMAP-Rule" id="MF_01865"/>
    </source>
</evidence>
<evidence type="ECO:0000255" key="2">
    <source>
        <dbReference type="PROSITE-ProRule" id="PRU01266"/>
    </source>
</evidence>
<name>RIMO_ACTP2</name>
<gene>
    <name evidence="1" type="primary">rimO</name>
    <name type="ordered locus">APL_1636</name>
</gene>
<keyword id="KW-0004">4Fe-4S</keyword>
<keyword id="KW-0963">Cytoplasm</keyword>
<keyword id="KW-0408">Iron</keyword>
<keyword id="KW-0411">Iron-sulfur</keyword>
<keyword id="KW-0479">Metal-binding</keyword>
<keyword id="KW-1185">Reference proteome</keyword>
<keyword id="KW-0949">S-adenosyl-L-methionine</keyword>
<keyword id="KW-0808">Transferase</keyword>
<comment type="function">
    <text evidence="1">Catalyzes the methylthiolation of an aspartic acid residue of ribosomal protein uS12.</text>
</comment>
<comment type="catalytic activity">
    <reaction evidence="1">
        <text>L-aspartate(89)-[ribosomal protein uS12]-hydrogen + (sulfur carrier)-SH + AH2 + 2 S-adenosyl-L-methionine = 3-methylsulfanyl-L-aspartate(89)-[ribosomal protein uS12]-hydrogen + (sulfur carrier)-H + 5'-deoxyadenosine + L-methionine + A + S-adenosyl-L-homocysteine + 2 H(+)</text>
        <dbReference type="Rhea" id="RHEA:37087"/>
        <dbReference type="Rhea" id="RHEA-COMP:10460"/>
        <dbReference type="Rhea" id="RHEA-COMP:10461"/>
        <dbReference type="Rhea" id="RHEA-COMP:14737"/>
        <dbReference type="Rhea" id="RHEA-COMP:14739"/>
        <dbReference type="ChEBI" id="CHEBI:13193"/>
        <dbReference type="ChEBI" id="CHEBI:15378"/>
        <dbReference type="ChEBI" id="CHEBI:17319"/>
        <dbReference type="ChEBI" id="CHEBI:17499"/>
        <dbReference type="ChEBI" id="CHEBI:29917"/>
        <dbReference type="ChEBI" id="CHEBI:29961"/>
        <dbReference type="ChEBI" id="CHEBI:57844"/>
        <dbReference type="ChEBI" id="CHEBI:57856"/>
        <dbReference type="ChEBI" id="CHEBI:59789"/>
        <dbReference type="ChEBI" id="CHEBI:64428"/>
        <dbReference type="ChEBI" id="CHEBI:73599"/>
        <dbReference type="EC" id="2.8.4.4"/>
    </reaction>
</comment>
<comment type="cofactor">
    <cofactor evidence="1">
        <name>[4Fe-4S] cluster</name>
        <dbReference type="ChEBI" id="CHEBI:49883"/>
    </cofactor>
    <text evidence="1">Binds 2 [4Fe-4S] clusters. One cluster is coordinated with 3 cysteines and an exchangeable S-adenosyl-L-methionine.</text>
</comment>
<comment type="subcellular location">
    <subcellularLocation>
        <location evidence="1">Cytoplasm</location>
    </subcellularLocation>
</comment>
<comment type="similarity">
    <text evidence="1">Belongs to the methylthiotransferase family. RimO subfamily.</text>
</comment>
<organism>
    <name type="scientific">Actinobacillus pleuropneumoniae serotype 5b (strain L20)</name>
    <dbReference type="NCBI Taxonomy" id="416269"/>
    <lineage>
        <taxon>Bacteria</taxon>
        <taxon>Pseudomonadati</taxon>
        <taxon>Pseudomonadota</taxon>
        <taxon>Gammaproteobacteria</taxon>
        <taxon>Pasteurellales</taxon>
        <taxon>Pasteurellaceae</taxon>
        <taxon>Actinobacillus</taxon>
    </lineage>
</organism>
<proteinExistence type="inferred from homology"/>